<proteinExistence type="inferred from homology"/>
<reference key="1">
    <citation type="journal article" date="2007" name="J. Bacteriol.">
        <title>The complete genome sequence of Roseobacter denitrificans reveals a mixotrophic rather than photosynthetic metabolism.</title>
        <authorList>
            <person name="Swingley W.D."/>
            <person name="Sadekar S."/>
            <person name="Mastrian S.D."/>
            <person name="Matthies H.J."/>
            <person name="Hao J."/>
            <person name="Ramos H."/>
            <person name="Acharya C.R."/>
            <person name="Conrad A.L."/>
            <person name="Taylor H.L."/>
            <person name="Dejesa L.C."/>
            <person name="Shah M.K."/>
            <person name="O'Huallachain M.E."/>
            <person name="Lince M.T."/>
            <person name="Blankenship R.E."/>
            <person name="Beatty J.T."/>
            <person name="Touchman J.W."/>
        </authorList>
    </citation>
    <scope>NUCLEOTIDE SEQUENCE [LARGE SCALE GENOMIC DNA]</scope>
    <source>
        <strain>ATCC 33942 / OCh 114</strain>
    </source>
</reference>
<dbReference type="EMBL" id="CP000362">
    <property type="protein sequence ID" value="ABG31074.1"/>
    <property type="molecule type" value="Genomic_DNA"/>
</dbReference>
<dbReference type="RefSeq" id="WP_011567694.1">
    <property type="nucleotide sequence ID" value="NZ_FOOO01000013.1"/>
</dbReference>
<dbReference type="SMR" id="Q16AB9"/>
<dbReference type="STRING" id="375451.RD1_1436"/>
<dbReference type="KEGG" id="rde:RD1_1436"/>
<dbReference type="eggNOG" id="COG0100">
    <property type="taxonomic scope" value="Bacteria"/>
</dbReference>
<dbReference type="HOGENOM" id="CLU_072439_5_0_5"/>
<dbReference type="OrthoDB" id="9806415at2"/>
<dbReference type="Proteomes" id="UP000007029">
    <property type="component" value="Chromosome"/>
</dbReference>
<dbReference type="GO" id="GO:1990904">
    <property type="term" value="C:ribonucleoprotein complex"/>
    <property type="evidence" value="ECO:0007669"/>
    <property type="project" value="UniProtKB-KW"/>
</dbReference>
<dbReference type="GO" id="GO:0005840">
    <property type="term" value="C:ribosome"/>
    <property type="evidence" value="ECO:0007669"/>
    <property type="project" value="UniProtKB-KW"/>
</dbReference>
<dbReference type="GO" id="GO:0019843">
    <property type="term" value="F:rRNA binding"/>
    <property type="evidence" value="ECO:0007669"/>
    <property type="project" value="UniProtKB-UniRule"/>
</dbReference>
<dbReference type="GO" id="GO:0003735">
    <property type="term" value="F:structural constituent of ribosome"/>
    <property type="evidence" value="ECO:0007669"/>
    <property type="project" value="InterPro"/>
</dbReference>
<dbReference type="GO" id="GO:0006412">
    <property type="term" value="P:translation"/>
    <property type="evidence" value="ECO:0007669"/>
    <property type="project" value="UniProtKB-UniRule"/>
</dbReference>
<dbReference type="FunFam" id="3.30.420.80:FF:000001">
    <property type="entry name" value="30S ribosomal protein S11"/>
    <property type="match status" value="1"/>
</dbReference>
<dbReference type="Gene3D" id="3.30.420.80">
    <property type="entry name" value="Ribosomal protein S11"/>
    <property type="match status" value="1"/>
</dbReference>
<dbReference type="HAMAP" id="MF_01310">
    <property type="entry name" value="Ribosomal_uS11"/>
    <property type="match status" value="1"/>
</dbReference>
<dbReference type="InterPro" id="IPR001971">
    <property type="entry name" value="Ribosomal_uS11"/>
</dbReference>
<dbReference type="InterPro" id="IPR019981">
    <property type="entry name" value="Ribosomal_uS11_bac-type"/>
</dbReference>
<dbReference type="InterPro" id="IPR018102">
    <property type="entry name" value="Ribosomal_uS11_CS"/>
</dbReference>
<dbReference type="InterPro" id="IPR036967">
    <property type="entry name" value="Ribosomal_uS11_sf"/>
</dbReference>
<dbReference type="NCBIfam" id="NF003698">
    <property type="entry name" value="PRK05309.1"/>
    <property type="match status" value="1"/>
</dbReference>
<dbReference type="NCBIfam" id="TIGR03632">
    <property type="entry name" value="uS11_bact"/>
    <property type="match status" value="1"/>
</dbReference>
<dbReference type="PANTHER" id="PTHR11759">
    <property type="entry name" value="40S RIBOSOMAL PROTEIN S14/30S RIBOSOMAL PROTEIN S11"/>
    <property type="match status" value="1"/>
</dbReference>
<dbReference type="Pfam" id="PF00411">
    <property type="entry name" value="Ribosomal_S11"/>
    <property type="match status" value="1"/>
</dbReference>
<dbReference type="PIRSF" id="PIRSF002131">
    <property type="entry name" value="Ribosomal_S11"/>
    <property type="match status" value="1"/>
</dbReference>
<dbReference type="SUPFAM" id="SSF53137">
    <property type="entry name" value="Translational machinery components"/>
    <property type="match status" value="1"/>
</dbReference>
<dbReference type="PROSITE" id="PS00054">
    <property type="entry name" value="RIBOSOMAL_S11"/>
    <property type="match status" value="1"/>
</dbReference>
<evidence type="ECO:0000255" key="1">
    <source>
        <dbReference type="HAMAP-Rule" id="MF_01310"/>
    </source>
</evidence>
<evidence type="ECO:0000305" key="2"/>
<name>RS11_ROSDO</name>
<comment type="function">
    <text evidence="1">Located on the platform of the 30S subunit, it bridges several disparate RNA helices of the 16S rRNA. Forms part of the Shine-Dalgarno cleft in the 70S ribosome.</text>
</comment>
<comment type="subunit">
    <text evidence="1">Part of the 30S ribosomal subunit. Interacts with proteins S7 and S18. Binds to IF-3.</text>
</comment>
<comment type="similarity">
    <text evidence="1">Belongs to the universal ribosomal protein uS11 family.</text>
</comment>
<accession>Q16AB9</accession>
<keyword id="KW-1185">Reference proteome</keyword>
<keyword id="KW-0687">Ribonucleoprotein</keyword>
<keyword id="KW-0689">Ribosomal protein</keyword>
<keyword id="KW-0694">RNA-binding</keyword>
<keyword id="KW-0699">rRNA-binding</keyword>
<feature type="chain" id="PRO_0000294842" description="Small ribosomal subunit protein uS11">
    <location>
        <begin position="1"/>
        <end position="129"/>
    </location>
</feature>
<protein>
    <recommendedName>
        <fullName evidence="1">Small ribosomal subunit protein uS11</fullName>
    </recommendedName>
    <alternativeName>
        <fullName evidence="2">30S ribosomal protein S11</fullName>
    </alternativeName>
</protein>
<gene>
    <name evidence="1" type="primary">rpsK</name>
    <name type="ordered locus">RD1_1436</name>
</gene>
<organism>
    <name type="scientific">Roseobacter denitrificans (strain ATCC 33942 / OCh 114)</name>
    <name type="common">Erythrobacter sp. (strain OCh 114)</name>
    <name type="synonym">Roseobacter denitrificans</name>
    <dbReference type="NCBI Taxonomy" id="375451"/>
    <lineage>
        <taxon>Bacteria</taxon>
        <taxon>Pseudomonadati</taxon>
        <taxon>Pseudomonadota</taxon>
        <taxon>Alphaproteobacteria</taxon>
        <taxon>Rhodobacterales</taxon>
        <taxon>Roseobacteraceae</taxon>
        <taxon>Roseobacter</taxon>
    </lineage>
</organism>
<sequence>MARDKVRVKKKASKNIAAGVAHVNSSFNNTKILISDVQGNAISWSSAGTMGFKGSRKSTPYAAQMAAEDAGRKAQEHGVKTLEVEVQGPGSGRESALRALAAAGFNITSIRDVTPMAHNGCRPPKRRRV</sequence>